<name>PRSA_CLOPS</name>
<gene>
    <name evidence="1" type="primary">prsA</name>
    <name type="ordered locus">CPR_2492</name>
</gene>
<reference key="1">
    <citation type="journal article" date="2006" name="Genome Res.">
        <title>Skewed genomic variability in strains of the toxigenic bacterial pathogen, Clostridium perfringens.</title>
        <authorList>
            <person name="Myers G.S.A."/>
            <person name="Rasko D.A."/>
            <person name="Cheung J.K."/>
            <person name="Ravel J."/>
            <person name="Seshadri R."/>
            <person name="DeBoy R.T."/>
            <person name="Ren Q."/>
            <person name="Varga J."/>
            <person name="Awad M.M."/>
            <person name="Brinkac L.M."/>
            <person name="Daugherty S.C."/>
            <person name="Haft D.H."/>
            <person name="Dodson R.J."/>
            <person name="Madupu R."/>
            <person name="Nelson W.C."/>
            <person name="Rosovitz M.J."/>
            <person name="Sullivan S.A."/>
            <person name="Khouri H."/>
            <person name="Dimitrov G.I."/>
            <person name="Watkins K.L."/>
            <person name="Mulligan S."/>
            <person name="Benton J."/>
            <person name="Radune D."/>
            <person name="Fisher D.J."/>
            <person name="Atkins H.S."/>
            <person name="Hiscox T."/>
            <person name="Jost B.H."/>
            <person name="Billington S.J."/>
            <person name="Songer J.G."/>
            <person name="McClane B.A."/>
            <person name="Titball R.W."/>
            <person name="Rood J.I."/>
            <person name="Melville S.B."/>
            <person name="Paulsen I.T."/>
        </authorList>
    </citation>
    <scope>NUCLEOTIDE SEQUENCE [LARGE SCALE GENOMIC DNA]</scope>
    <source>
        <strain>SM101 / Type A</strain>
    </source>
</reference>
<accession>Q0SQ68</accession>
<keyword id="KW-1003">Cell membrane</keyword>
<keyword id="KW-0413">Isomerase</keyword>
<keyword id="KW-0449">Lipoprotein</keyword>
<keyword id="KW-0472">Membrane</keyword>
<keyword id="KW-0564">Palmitate</keyword>
<keyword id="KW-0697">Rotamase</keyword>
<keyword id="KW-0732">Signal</keyword>
<organism>
    <name type="scientific">Clostridium perfringens (strain SM101 / Type A)</name>
    <dbReference type="NCBI Taxonomy" id="289380"/>
    <lineage>
        <taxon>Bacteria</taxon>
        <taxon>Bacillati</taxon>
        <taxon>Bacillota</taxon>
        <taxon>Clostridia</taxon>
        <taxon>Eubacteriales</taxon>
        <taxon>Clostridiaceae</taxon>
        <taxon>Clostridium</taxon>
    </lineage>
</organism>
<dbReference type="EC" id="5.2.1.8" evidence="1"/>
<dbReference type="EMBL" id="CP000312">
    <property type="protein sequence ID" value="ABG87706.1"/>
    <property type="molecule type" value="Genomic_DNA"/>
</dbReference>
<dbReference type="RefSeq" id="WP_011593186.1">
    <property type="nucleotide sequence ID" value="NC_008262.1"/>
</dbReference>
<dbReference type="SMR" id="Q0SQ68"/>
<dbReference type="KEGG" id="cpr:CPR_2492"/>
<dbReference type="Proteomes" id="UP000001824">
    <property type="component" value="Chromosome"/>
</dbReference>
<dbReference type="GO" id="GO:0005886">
    <property type="term" value="C:plasma membrane"/>
    <property type="evidence" value="ECO:0007669"/>
    <property type="project" value="UniProtKB-SubCell"/>
</dbReference>
<dbReference type="GO" id="GO:0003755">
    <property type="term" value="F:peptidyl-prolyl cis-trans isomerase activity"/>
    <property type="evidence" value="ECO:0007669"/>
    <property type="project" value="UniProtKB-UniRule"/>
</dbReference>
<dbReference type="GO" id="GO:0006457">
    <property type="term" value="P:protein folding"/>
    <property type="evidence" value="ECO:0007669"/>
    <property type="project" value="UniProtKB-UniRule"/>
</dbReference>
<dbReference type="Gene3D" id="3.10.50.40">
    <property type="match status" value="1"/>
</dbReference>
<dbReference type="Gene3D" id="1.10.4030.10">
    <property type="entry name" value="Porin chaperone SurA, peptide-binding domain"/>
    <property type="match status" value="1"/>
</dbReference>
<dbReference type="HAMAP" id="MF_01145">
    <property type="entry name" value="Foldase_PrsA"/>
    <property type="match status" value="1"/>
</dbReference>
<dbReference type="InterPro" id="IPR023059">
    <property type="entry name" value="Foldase_PrsA"/>
</dbReference>
<dbReference type="InterPro" id="IPR046357">
    <property type="entry name" value="PPIase_dom_sf"/>
</dbReference>
<dbReference type="InterPro" id="IPR000297">
    <property type="entry name" value="PPIase_PpiC"/>
</dbReference>
<dbReference type="InterPro" id="IPR050245">
    <property type="entry name" value="PrsA_foldase"/>
</dbReference>
<dbReference type="InterPro" id="IPR027304">
    <property type="entry name" value="Trigger_fact/SurA_dom_sf"/>
</dbReference>
<dbReference type="NCBIfam" id="NF000809">
    <property type="entry name" value="PRK00059.1"/>
    <property type="match status" value="1"/>
</dbReference>
<dbReference type="PANTHER" id="PTHR47245:SF1">
    <property type="entry name" value="FOLDASE PROTEIN PRSA"/>
    <property type="match status" value="1"/>
</dbReference>
<dbReference type="PANTHER" id="PTHR47245">
    <property type="entry name" value="PEPTIDYLPROLYL ISOMERASE"/>
    <property type="match status" value="1"/>
</dbReference>
<dbReference type="Pfam" id="PF13145">
    <property type="entry name" value="Rotamase_2"/>
    <property type="match status" value="1"/>
</dbReference>
<dbReference type="Pfam" id="PF13624">
    <property type="entry name" value="SurA_N_3"/>
    <property type="match status" value="1"/>
</dbReference>
<dbReference type="SUPFAM" id="SSF54534">
    <property type="entry name" value="FKBP-like"/>
    <property type="match status" value="1"/>
</dbReference>
<dbReference type="SUPFAM" id="SSF109998">
    <property type="entry name" value="Triger factor/SurA peptide-binding domain-like"/>
    <property type="match status" value="1"/>
</dbReference>
<dbReference type="PROSITE" id="PS50198">
    <property type="entry name" value="PPIC_PPIASE_2"/>
    <property type="match status" value="1"/>
</dbReference>
<dbReference type="PROSITE" id="PS51257">
    <property type="entry name" value="PROKAR_LIPOPROTEIN"/>
    <property type="match status" value="1"/>
</dbReference>
<comment type="function">
    <text evidence="1">Plays a major role in protein secretion by helping the post-translocational extracellular folding of several secreted proteins.</text>
</comment>
<comment type="catalytic activity">
    <reaction evidence="1">
        <text>[protein]-peptidylproline (omega=180) = [protein]-peptidylproline (omega=0)</text>
        <dbReference type="Rhea" id="RHEA:16237"/>
        <dbReference type="Rhea" id="RHEA-COMP:10747"/>
        <dbReference type="Rhea" id="RHEA-COMP:10748"/>
        <dbReference type="ChEBI" id="CHEBI:83833"/>
        <dbReference type="ChEBI" id="CHEBI:83834"/>
        <dbReference type="EC" id="5.2.1.8"/>
    </reaction>
</comment>
<comment type="subcellular location">
    <subcellularLocation>
        <location evidence="1">Cell membrane</location>
        <topology evidence="1">Lipid-anchor</topology>
    </subcellularLocation>
</comment>
<comment type="similarity">
    <text evidence="1">Belongs to the PrsA family.</text>
</comment>
<feature type="signal peptide" evidence="1">
    <location>
        <begin position="1"/>
        <end position="22"/>
    </location>
</feature>
<feature type="chain" id="PRO_1000085051" description="Foldase protein PrsA">
    <location>
        <begin position="23"/>
        <end position="342"/>
    </location>
</feature>
<feature type="domain" description="PpiC" evidence="1">
    <location>
        <begin position="190"/>
        <end position="284"/>
    </location>
</feature>
<feature type="lipid moiety-binding region" description="N-palmitoyl cysteine" evidence="1">
    <location>
        <position position="23"/>
    </location>
</feature>
<feature type="lipid moiety-binding region" description="S-diacylglycerol cysteine" evidence="1">
    <location>
        <position position="23"/>
    </location>
</feature>
<sequence length="342" mass="38782">MVSVKKIVASALVGVLMFSAVGCNMVEKTQAAIDKTTVATVNGEKITLGEVDSHLKGVFTQMKSQYGDKYMDDPQVAQQILQQRQGILNSLVEEKILVVEANKENIVPSEEELNKKIEQQIKLYKEQYGEEGYKKAVESMGYNEDTFKEYLKNQFIADAAASNASKDIKVTDEEAQKYYDENKKQFEVQAKGVLARHLLFENEEEAQKAYDEIQSGKTTFNDLFTKYENNKLEKKTPIAESFVVPDENAQVAKEFVEGLKSLKEGEISKPIKTQFGYHIIQAGATYEKGAQLPFNEVKSQIIQILKQQKDSQKLKSDMDQWKKDLNVKVYDDKLQEGLKISK</sequence>
<evidence type="ECO:0000255" key="1">
    <source>
        <dbReference type="HAMAP-Rule" id="MF_01145"/>
    </source>
</evidence>
<proteinExistence type="inferred from homology"/>
<protein>
    <recommendedName>
        <fullName evidence="1">Foldase protein PrsA</fullName>
        <ecNumber evidence="1">5.2.1.8</ecNumber>
    </recommendedName>
</protein>